<reference key="1">
    <citation type="online journal article" date="1998" name="Plant Gene Register">
        <title>Structure of Oryza sativa genes encoding three class I low molecular mass heat shock proteins.</title>
        <authorList>
            <person name="Guan J.-C."/>
            <person name="Chang F.-C."/>
            <person name="Tseng T.-S."/>
            <person name="Chang P.-F.L."/>
            <person name="Yeh K.-W."/>
            <person name="Chen Y.-M."/>
            <person name="Lin C.-Y."/>
        </authorList>
        <locator>PGR98-178</locator>
    </citation>
    <scope>NUCLEOTIDE SEQUENCE [GENOMIC DNA]</scope>
    <source>
        <strain>cv. Tainung 67</strain>
    </source>
</reference>
<reference key="2">
    <citation type="journal article" date="2005" name="Genome Res.">
        <title>Sequence, annotation, and analysis of synteny between rice chromosome 3 and diverged grass species.</title>
        <authorList>
            <consortium name="The rice chromosome 3 sequencing consortium"/>
            <person name="Buell C.R."/>
            <person name="Yuan Q."/>
            <person name="Ouyang S."/>
            <person name="Liu J."/>
            <person name="Zhu W."/>
            <person name="Wang A."/>
            <person name="Maiti R."/>
            <person name="Haas B."/>
            <person name="Wortman J."/>
            <person name="Pertea M."/>
            <person name="Jones K.M."/>
            <person name="Kim M."/>
            <person name="Overton L."/>
            <person name="Tsitrin T."/>
            <person name="Fadrosh D."/>
            <person name="Bera J."/>
            <person name="Weaver B."/>
            <person name="Jin S."/>
            <person name="Johri S."/>
            <person name="Reardon M."/>
            <person name="Webb K."/>
            <person name="Hill J."/>
            <person name="Moffat K."/>
            <person name="Tallon L."/>
            <person name="Van Aken S."/>
            <person name="Lewis M."/>
            <person name="Utterback T."/>
            <person name="Feldblyum T."/>
            <person name="Zismann V."/>
            <person name="Iobst S."/>
            <person name="Hsiao J."/>
            <person name="de Vazeille A.R."/>
            <person name="Salzberg S.L."/>
            <person name="White O."/>
            <person name="Fraser C.M."/>
            <person name="Yu Y."/>
            <person name="Kim H."/>
            <person name="Rambo T."/>
            <person name="Currie J."/>
            <person name="Collura K."/>
            <person name="Kernodle-Thompson S."/>
            <person name="Wei F."/>
            <person name="Kudrna K."/>
            <person name="Ammiraju J.S.S."/>
            <person name="Luo M."/>
            <person name="Goicoechea J.L."/>
            <person name="Wing R.A."/>
            <person name="Henry D."/>
            <person name="Oates R."/>
            <person name="Palmer M."/>
            <person name="Pries G."/>
            <person name="Saski C."/>
            <person name="Simmons J."/>
            <person name="Soderlund C."/>
            <person name="Nelson W."/>
            <person name="de la Bastide M."/>
            <person name="Spiegel L."/>
            <person name="Nascimento L."/>
            <person name="Huang E."/>
            <person name="Preston R."/>
            <person name="Zutavern T."/>
            <person name="Palmer L."/>
            <person name="O'Shaughnessy A."/>
            <person name="Dike S."/>
            <person name="McCombie W.R."/>
            <person name="Minx P."/>
            <person name="Cordum H."/>
            <person name="Wilson R."/>
            <person name="Jin W."/>
            <person name="Lee H.R."/>
            <person name="Jiang J."/>
            <person name="Jackson S."/>
        </authorList>
    </citation>
    <scope>NUCLEOTIDE SEQUENCE [LARGE SCALE GENOMIC DNA]</scope>
    <source>
        <strain>cv. Nipponbare</strain>
    </source>
</reference>
<reference key="3">
    <citation type="journal article" date="2005" name="Nature">
        <title>The map-based sequence of the rice genome.</title>
        <authorList>
            <consortium name="International rice genome sequencing project (IRGSP)"/>
        </authorList>
    </citation>
    <scope>NUCLEOTIDE SEQUENCE [LARGE SCALE GENOMIC DNA]</scope>
    <source>
        <strain>cv. Nipponbare</strain>
    </source>
</reference>
<reference key="4">
    <citation type="journal article" date="2008" name="Nucleic Acids Res.">
        <title>The rice annotation project database (RAP-DB): 2008 update.</title>
        <authorList>
            <consortium name="The rice annotation project (RAP)"/>
        </authorList>
    </citation>
    <scope>GENOME REANNOTATION</scope>
    <source>
        <strain>cv. Nipponbare</strain>
    </source>
</reference>
<reference key="5">
    <citation type="journal article" date="2013" name="Rice">
        <title>Improvement of the Oryza sativa Nipponbare reference genome using next generation sequence and optical map data.</title>
        <authorList>
            <person name="Kawahara Y."/>
            <person name="de la Bastide M."/>
            <person name="Hamilton J.P."/>
            <person name="Kanamori H."/>
            <person name="McCombie W.R."/>
            <person name="Ouyang S."/>
            <person name="Schwartz D.C."/>
            <person name="Tanaka T."/>
            <person name="Wu J."/>
            <person name="Zhou S."/>
            <person name="Childs K.L."/>
            <person name="Davidson R.M."/>
            <person name="Lin H."/>
            <person name="Quesada-Ocampo L."/>
            <person name="Vaillancourt B."/>
            <person name="Sakai H."/>
            <person name="Lee S.S."/>
            <person name="Kim J."/>
            <person name="Numa H."/>
            <person name="Itoh T."/>
            <person name="Buell C.R."/>
            <person name="Matsumoto T."/>
        </authorList>
    </citation>
    <scope>GENOME REANNOTATION</scope>
    <source>
        <strain>cv. Nipponbare</strain>
    </source>
</reference>
<reference key="6">
    <citation type="journal article" date="2005" name="PLoS Biol.">
        <title>The genomes of Oryza sativa: a history of duplications.</title>
        <authorList>
            <person name="Yu J."/>
            <person name="Wang J."/>
            <person name="Lin W."/>
            <person name="Li S."/>
            <person name="Li H."/>
            <person name="Zhou J."/>
            <person name="Ni P."/>
            <person name="Dong W."/>
            <person name="Hu S."/>
            <person name="Zeng C."/>
            <person name="Zhang J."/>
            <person name="Zhang Y."/>
            <person name="Li R."/>
            <person name="Xu Z."/>
            <person name="Li S."/>
            <person name="Li X."/>
            <person name="Zheng H."/>
            <person name="Cong L."/>
            <person name="Lin L."/>
            <person name="Yin J."/>
            <person name="Geng J."/>
            <person name="Li G."/>
            <person name="Shi J."/>
            <person name="Liu J."/>
            <person name="Lv H."/>
            <person name="Li J."/>
            <person name="Wang J."/>
            <person name="Deng Y."/>
            <person name="Ran L."/>
            <person name="Shi X."/>
            <person name="Wang X."/>
            <person name="Wu Q."/>
            <person name="Li C."/>
            <person name="Ren X."/>
            <person name="Wang J."/>
            <person name="Wang X."/>
            <person name="Li D."/>
            <person name="Liu D."/>
            <person name="Zhang X."/>
            <person name="Ji Z."/>
            <person name="Zhao W."/>
            <person name="Sun Y."/>
            <person name="Zhang Z."/>
            <person name="Bao J."/>
            <person name="Han Y."/>
            <person name="Dong L."/>
            <person name="Ji J."/>
            <person name="Chen P."/>
            <person name="Wu S."/>
            <person name="Liu J."/>
            <person name="Xiao Y."/>
            <person name="Bu D."/>
            <person name="Tan J."/>
            <person name="Yang L."/>
            <person name="Ye C."/>
            <person name="Zhang J."/>
            <person name="Xu J."/>
            <person name="Zhou Y."/>
            <person name="Yu Y."/>
            <person name="Zhang B."/>
            <person name="Zhuang S."/>
            <person name="Wei H."/>
            <person name="Liu B."/>
            <person name="Lei M."/>
            <person name="Yu H."/>
            <person name="Li Y."/>
            <person name="Xu H."/>
            <person name="Wei S."/>
            <person name="He X."/>
            <person name="Fang L."/>
            <person name="Zhang Z."/>
            <person name="Zhang Y."/>
            <person name="Huang X."/>
            <person name="Su Z."/>
            <person name="Tong W."/>
            <person name="Li J."/>
            <person name="Tong Z."/>
            <person name="Li S."/>
            <person name="Ye J."/>
            <person name="Wang L."/>
            <person name="Fang L."/>
            <person name="Lei T."/>
            <person name="Chen C.-S."/>
            <person name="Chen H.-C."/>
            <person name="Xu Z."/>
            <person name="Li H."/>
            <person name="Huang H."/>
            <person name="Zhang F."/>
            <person name="Xu H."/>
            <person name="Li N."/>
            <person name="Zhao C."/>
            <person name="Li S."/>
            <person name="Dong L."/>
            <person name="Huang Y."/>
            <person name="Li L."/>
            <person name="Xi Y."/>
            <person name="Qi Q."/>
            <person name="Li W."/>
            <person name="Zhang B."/>
            <person name="Hu W."/>
            <person name="Zhang Y."/>
            <person name="Tian X."/>
            <person name="Jiao Y."/>
            <person name="Liang X."/>
            <person name="Jin J."/>
            <person name="Gao L."/>
            <person name="Zheng W."/>
            <person name="Hao B."/>
            <person name="Liu S.-M."/>
            <person name="Wang W."/>
            <person name="Yuan L."/>
            <person name="Cao M."/>
            <person name="McDermott J."/>
            <person name="Samudrala R."/>
            <person name="Wang J."/>
            <person name="Wong G.K.-S."/>
            <person name="Yang H."/>
        </authorList>
    </citation>
    <scope>NUCLEOTIDE SEQUENCE [LARGE SCALE GENOMIC DNA]</scope>
    <source>
        <strain>cv. Nipponbare</strain>
    </source>
</reference>
<reference key="7">
    <citation type="journal article" date="2003" name="Science">
        <title>Collection, mapping, and annotation of over 28,000 cDNA clones from japonica rice.</title>
        <authorList>
            <consortium name="The rice full-length cDNA consortium"/>
        </authorList>
    </citation>
    <scope>NUCLEOTIDE SEQUENCE [LARGE SCALE MRNA]</scope>
    <source>
        <strain>cv. Nipponbare</strain>
    </source>
</reference>
<reference key="8">
    <citation type="journal article" date="2004" name="Plant Mol. Biol.">
        <title>Characterization of the genomic structures and selective expression profiles of nine class I small heat shock protein genes clustered on two chromosomes in rice (Oryza sativa L.).</title>
        <authorList>
            <person name="Guan J.-C."/>
            <person name="Jinn T.-L."/>
            <person name="Yeh C.-H."/>
            <person name="Feng S.-P."/>
            <person name="Chen Y.-M."/>
            <person name="Lin C.-Y."/>
        </authorList>
    </citation>
    <scope>INDUCTION</scope>
</reference>
<reference key="9">
    <citation type="journal article" date="2009" name="BMC Genomics">
        <title>Rice sHsp genes: genomic organization and expression profiling under stress and development.</title>
        <authorList>
            <person name="Sarkar N.K."/>
            <person name="Kim Y.-K."/>
            <person name="Grover A."/>
        </authorList>
    </citation>
    <scope>INDUCTION</scope>
    <scope>GENE FAMILY</scope>
</reference>
<proteinExistence type="evidence at transcript level"/>
<dbReference type="EMBL" id="U83671">
    <property type="protein sequence ID" value="AAC78394.1"/>
    <property type="molecule type" value="Genomic_DNA"/>
</dbReference>
<dbReference type="EMBL" id="AC135208">
    <property type="protein sequence ID" value="AAP06884.1"/>
    <property type="molecule type" value="Genomic_DNA"/>
</dbReference>
<dbReference type="EMBL" id="AC139168">
    <property type="protein sequence ID" value="AAP06891.1"/>
    <property type="molecule type" value="Genomic_DNA"/>
</dbReference>
<dbReference type="EMBL" id="DP000009">
    <property type="protein sequence ID" value="ABF95157.1"/>
    <property type="molecule type" value="Genomic_DNA"/>
</dbReference>
<dbReference type="EMBL" id="AP008209">
    <property type="protein sequence ID" value="BAF11576.1"/>
    <property type="molecule type" value="Genomic_DNA"/>
</dbReference>
<dbReference type="EMBL" id="AP014959">
    <property type="protein sequence ID" value="BAS83422.1"/>
    <property type="molecule type" value="Genomic_DNA"/>
</dbReference>
<dbReference type="EMBL" id="CM000140">
    <property type="protein sequence ID" value="EAZ26380.1"/>
    <property type="molecule type" value="Genomic_DNA"/>
</dbReference>
<dbReference type="EMBL" id="AK069547">
    <property type="protein sequence ID" value="BAG91483.1"/>
    <property type="molecule type" value="mRNA"/>
</dbReference>
<dbReference type="PIR" id="T04173">
    <property type="entry name" value="T04173"/>
</dbReference>
<dbReference type="RefSeq" id="XP_015632364.1">
    <property type="nucleotide sequence ID" value="XM_015776878.1"/>
</dbReference>
<dbReference type="SMR" id="Q84J50"/>
<dbReference type="FunCoup" id="Q84J50">
    <property type="interactions" value="448"/>
</dbReference>
<dbReference type="STRING" id="39947.Q84J50"/>
<dbReference type="PaxDb" id="39947-Q84J50"/>
<dbReference type="EnsemblPlants" id="Os03t0267200-01">
    <property type="protein sequence ID" value="Os03t0267200-01"/>
    <property type="gene ID" value="Os03g0267200"/>
</dbReference>
<dbReference type="Gramene" id="Os03t0267200-01">
    <property type="protein sequence ID" value="Os03t0267200-01"/>
    <property type="gene ID" value="Os03g0267200"/>
</dbReference>
<dbReference type="KEGG" id="dosa:Os03g0267200"/>
<dbReference type="eggNOG" id="KOG0710">
    <property type="taxonomic scope" value="Eukaryota"/>
</dbReference>
<dbReference type="HOGENOM" id="CLU_046737_5_0_1"/>
<dbReference type="InParanoid" id="Q84J50"/>
<dbReference type="OrthoDB" id="5511210at2759"/>
<dbReference type="Proteomes" id="UP000000763">
    <property type="component" value="Chromosome 3"/>
</dbReference>
<dbReference type="Proteomes" id="UP000007752">
    <property type="component" value="Chromosome 3"/>
</dbReference>
<dbReference type="Proteomes" id="UP000059680">
    <property type="component" value="Chromosome 3"/>
</dbReference>
<dbReference type="ExpressionAtlas" id="Q84J50">
    <property type="expression patterns" value="differential"/>
</dbReference>
<dbReference type="GO" id="GO:0005737">
    <property type="term" value="C:cytoplasm"/>
    <property type="evidence" value="ECO:0007669"/>
    <property type="project" value="UniProtKB-SubCell"/>
</dbReference>
<dbReference type="GO" id="GO:0051082">
    <property type="term" value="F:unfolded protein binding"/>
    <property type="evidence" value="ECO:0000318"/>
    <property type="project" value="GO_Central"/>
</dbReference>
<dbReference type="GO" id="GO:0051259">
    <property type="term" value="P:protein complex oligomerization"/>
    <property type="evidence" value="ECO:0000318"/>
    <property type="project" value="GO_Central"/>
</dbReference>
<dbReference type="GO" id="GO:0006457">
    <property type="term" value="P:protein folding"/>
    <property type="evidence" value="ECO:0000318"/>
    <property type="project" value="GO_Central"/>
</dbReference>
<dbReference type="GO" id="GO:0046685">
    <property type="term" value="P:response to arsenic-containing substance"/>
    <property type="evidence" value="ECO:0000270"/>
    <property type="project" value="UniProtKB"/>
</dbReference>
<dbReference type="GO" id="GO:0046686">
    <property type="term" value="P:response to cadmium ion"/>
    <property type="evidence" value="ECO:0000270"/>
    <property type="project" value="UniProtKB"/>
</dbReference>
<dbReference type="GO" id="GO:0046688">
    <property type="term" value="P:response to copper ion"/>
    <property type="evidence" value="ECO:0000270"/>
    <property type="project" value="UniProtKB"/>
</dbReference>
<dbReference type="GO" id="GO:0045471">
    <property type="term" value="P:response to ethanol"/>
    <property type="evidence" value="ECO:0000270"/>
    <property type="project" value="UniProtKB"/>
</dbReference>
<dbReference type="GO" id="GO:0009408">
    <property type="term" value="P:response to heat"/>
    <property type="evidence" value="ECO:0000270"/>
    <property type="project" value="UniProtKB"/>
</dbReference>
<dbReference type="GO" id="GO:0042542">
    <property type="term" value="P:response to hydrogen peroxide"/>
    <property type="evidence" value="ECO:0000270"/>
    <property type="project" value="UniProtKB"/>
</dbReference>
<dbReference type="GO" id="GO:0009651">
    <property type="term" value="P:response to salt stress"/>
    <property type="evidence" value="ECO:0000318"/>
    <property type="project" value="GO_Central"/>
</dbReference>
<dbReference type="CDD" id="cd06472">
    <property type="entry name" value="ACD_ScHsp26_like"/>
    <property type="match status" value="1"/>
</dbReference>
<dbReference type="FunFam" id="2.60.40.790:FF:000007">
    <property type="entry name" value="17.4 kDa class I heat shock protein"/>
    <property type="match status" value="1"/>
</dbReference>
<dbReference type="Gene3D" id="2.60.40.790">
    <property type="match status" value="1"/>
</dbReference>
<dbReference type="InterPro" id="IPR002068">
    <property type="entry name" value="A-crystallin/Hsp20_dom"/>
</dbReference>
<dbReference type="InterPro" id="IPR007052">
    <property type="entry name" value="CS_dom"/>
</dbReference>
<dbReference type="InterPro" id="IPR008978">
    <property type="entry name" value="HSP20-like_chaperone"/>
</dbReference>
<dbReference type="InterPro" id="IPR031107">
    <property type="entry name" value="Small_HSP"/>
</dbReference>
<dbReference type="PANTHER" id="PTHR11527">
    <property type="entry name" value="HEAT-SHOCK PROTEIN 20 FAMILY MEMBER"/>
    <property type="match status" value="1"/>
</dbReference>
<dbReference type="Pfam" id="PF00011">
    <property type="entry name" value="HSP20"/>
    <property type="match status" value="1"/>
</dbReference>
<dbReference type="SUPFAM" id="SSF49764">
    <property type="entry name" value="HSP20-like chaperones"/>
    <property type="match status" value="1"/>
</dbReference>
<dbReference type="PROSITE" id="PS01031">
    <property type="entry name" value="SHSP"/>
    <property type="match status" value="1"/>
</dbReference>
<feature type="chain" id="PRO_0000233694" description="17.7 kDa class I heat shock protein">
    <location>
        <begin position="1"/>
        <end position="159"/>
    </location>
</feature>
<feature type="domain" description="sHSP" evidence="1">
    <location>
        <begin position="45"/>
        <end position="159"/>
    </location>
</feature>
<name>HS177_ORYSJ</name>
<protein>
    <recommendedName>
        <fullName>17.7 kDa class I heat shock protein</fullName>
    </recommendedName>
    <alternativeName>
        <fullName>17.7 kDa heat shock protein</fullName>
        <shortName>OsHsp17.7</shortName>
    </alternativeName>
</protein>
<gene>
    <name type="primary">HSP17.7</name>
    <name type="ordered locus">Os03g0267200</name>
    <name type="ordered locus">LOC_Os03g16040</name>
    <name type="ORF">OJ1364E02.12</name>
    <name type="ORF">OJA1364E02.1</name>
    <name type="ORF">OsJ_10263</name>
</gene>
<evidence type="ECO:0000255" key="1">
    <source>
        <dbReference type="PROSITE-ProRule" id="PRU00285"/>
    </source>
</evidence>
<evidence type="ECO:0000269" key="2">
    <source>
    </source>
</evidence>
<evidence type="ECO:0000269" key="3">
    <source>
    </source>
</evidence>
<evidence type="ECO:0000305" key="4"/>
<keyword id="KW-0963">Cytoplasm</keyword>
<keyword id="KW-1185">Reference proteome</keyword>
<keyword id="KW-0346">Stress response</keyword>
<comment type="subunit">
    <text>May form oligomeric structures.</text>
</comment>
<comment type="subcellular location">
    <subcellularLocation>
        <location evidence="4">Cytoplasm</location>
    </subcellularLocation>
</comment>
<comment type="induction">
    <text evidence="2 3">By heat shock, arsenic, azetidine-2-carboxylate, cadmium, copper, ethanol and hydrogen peroxide.</text>
</comment>
<comment type="similarity">
    <text evidence="1">Belongs to the small heat shock protein (HSP20) family.</text>
</comment>
<organism>
    <name type="scientific">Oryza sativa subsp. japonica</name>
    <name type="common">Rice</name>
    <dbReference type="NCBI Taxonomy" id="39947"/>
    <lineage>
        <taxon>Eukaryota</taxon>
        <taxon>Viridiplantae</taxon>
        <taxon>Streptophyta</taxon>
        <taxon>Embryophyta</taxon>
        <taxon>Tracheophyta</taxon>
        <taxon>Spermatophyta</taxon>
        <taxon>Magnoliopsida</taxon>
        <taxon>Liliopsida</taxon>
        <taxon>Poales</taxon>
        <taxon>Poaceae</taxon>
        <taxon>BOP clade</taxon>
        <taxon>Oryzoideae</taxon>
        <taxon>Oryzeae</taxon>
        <taxon>Oryzinae</taxon>
        <taxon>Oryza</taxon>
        <taxon>Oryza sativa</taxon>
    </lineage>
</organism>
<accession>Q84J50</accession>
<accession>P93441</accession>
<accession>Q10NK1</accession>
<sequence length="159" mass="17658">MSLIRRGNAFDPFSLDLWDPVDGFPFGSGGSSSSSGSLFPRANSDAAAFAGARIDWKETPEVHVFKADVPGLKKEEVKVEVDDGNILQISGERSREQEEKSDKWHRVERSSGKFLRRFRLPENTKPEQIKASMENGVLTVTVPKEEPKKPDVKSIQISG</sequence>